<organism>
    <name type="scientific">Haemophilus influenzae (strain PittGG)</name>
    <dbReference type="NCBI Taxonomy" id="374931"/>
    <lineage>
        <taxon>Bacteria</taxon>
        <taxon>Pseudomonadati</taxon>
        <taxon>Pseudomonadota</taxon>
        <taxon>Gammaproteobacteria</taxon>
        <taxon>Pasteurellales</taxon>
        <taxon>Pasteurellaceae</taxon>
        <taxon>Haemophilus</taxon>
    </lineage>
</organism>
<dbReference type="EMBL" id="CP000672">
    <property type="protein sequence ID" value="ABR00345.1"/>
    <property type="molecule type" value="Genomic_DNA"/>
</dbReference>
<dbReference type="SMR" id="A5UHT9"/>
<dbReference type="KEGG" id="hiq:CGSHiGG_07430"/>
<dbReference type="HOGENOM" id="CLU_073626_1_1_6"/>
<dbReference type="Proteomes" id="UP000001990">
    <property type="component" value="Chromosome"/>
</dbReference>
<dbReference type="GO" id="GO:0022627">
    <property type="term" value="C:cytosolic small ribosomal subunit"/>
    <property type="evidence" value="ECO:0007669"/>
    <property type="project" value="TreeGrafter"/>
</dbReference>
<dbReference type="GO" id="GO:0019843">
    <property type="term" value="F:rRNA binding"/>
    <property type="evidence" value="ECO:0007669"/>
    <property type="project" value="UniProtKB-UniRule"/>
</dbReference>
<dbReference type="GO" id="GO:0003735">
    <property type="term" value="F:structural constituent of ribosome"/>
    <property type="evidence" value="ECO:0007669"/>
    <property type="project" value="InterPro"/>
</dbReference>
<dbReference type="GO" id="GO:0006412">
    <property type="term" value="P:translation"/>
    <property type="evidence" value="ECO:0007669"/>
    <property type="project" value="UniProtKB-UniRule"/>
</dbReference>
<dbReference type="CDD" id="cd00364">
    <property type="entry name" value="Ribosomal_uS17"/>
    <property type="match status" value="1"/>
</dbReference>
<dbReference type="FunFam" id="2.40.50.140:FF:000014">
    <property type="entry name" value="30S ribosomal protein S17"/>
    <property type="match status" value="1"/>
</dbReference>
<dbReference type="Gene3D" id="2.40.50.140">
    <property type="entry name" value="Nucleic acid-binding proteins"/>
    <property type="match status" value="1"/>
</dbReference>
<dbReference type="HAMAP" id="MF_01345_B">
    <property type="entry name" value="Ribosomal_uS17_B"/>
    <property type="match status" value="1"/>
</dbReference>
<dbReference type="InterPro" id="IPR012340">
    <property type="entry name" value="NA-bd_OB-fold"/>
</dbReference>
<dbReference type="InterPro" id="IPR000266">
    <property type="entry name" value="Ribosomal_uS17"/>
</dbReference>
<dbReference type="InterPro" id="IPR019984">
    <property type="entry name" value="Ribosomal_uS17_bact/chlr"/>
</dbReference>
<dbReference type="InterPro" id="IPR019979">
    <property type="entry name" value="Ribosomal_uS17_CS"/>
</dbReference>
<dbReference type="NCBIfam" id="NF004123">
    <property type="entry name" value="PRK05610.1"/>
    <property type="match status" value="1"/>
</dbReference>
<dbReference type="NCBIfam" id="TIGR03635">
    <property type="entry name" value="uS17_bact"/>
    <property type="match status" value="1"/>
</dbReference>
<dbReference type="PANTHER" id="PTHR10744">
    <property type="entry name" value="40S RIBOSOMAL PROTEIN S11 FAMILY MEMBER"/>
    <property type="match status" value="1"/>
</dbReference>
<dbReference type="PANTHER" id="PTHR10744:SF1">
    <property type="entry name" value="SMALL RIBOSOMAL SUBUNIT PROTEIN US17M"/>
    <property type="match status" value="1"/>
</dbReference>
<dbReference type="Pfam" id="PF00366">
    <property type="entry name" value="Ribosomal_S17"/>
    <property type="match status" value="1"/>
</dbReference>
<dbReference type="PRINTS" id="PR00973">
    <property type="entry name" value="RIBOSOMALS17"/>
</dbReference>
<dbReference type="SUPFAM" id="SSF50249">
    <property type="entry name" value="Nucleic acid-binding proteins"/>
    <property type="match status" value="1"/>
</dbReference>
<dbReference type="PROSITE" id="PS00056">
    <property type="entry name" value="RIBOSOMAL_S17"/>
    <property type="match status" value="1"/>
</dbReference>
<reference key="1">
    <citation type="journal article" date="2007" name="Genome Biol.">
        <title>Characterization and modeling of the Haemophilus influenzae core and supragenomes based on the complete genomic sequences of Rd and 12 clinical nontypeable strains.</title>
        <authorList>
            <person name="Hogg J.S."/>
            <person name="Hu F.Z."/>
            <person name="Janto B."/>
            <person name="Boissy R."/>
            <person name="Hayes J."/>
            <person name="Keefe R."/>
            <person name="Post J.C."/>
            <person name="Ehrlich G.D."/>
        </authorList>
    </citation>
    <scope>NUCLEOTIDE SEQUENCE [LARGE SCALE GENOMIC DNA]</scope>
    <source>
        <strain>PittGG</strain>
    </source>
</reference>
<feature type="chain" id="PRO_1000054960" description="Small ribosomal subunit protein uS17">
    <location>
        <begin position="1"/>
        <end position="85"/>
    </location>
</feature>
<sequence length="85" mass="9789">MTDKIRSVQGKVVSDKMEKSFVVAIERKVKHPLYGKFIRRTTKLHVHDENNEAKVGDTVEIRECRPLSKTKSWTLVRVVEKAVIA</sequence>
<gene>
    <name evidence="1" type="primary">rpsQ</name>
    <name type="ordered locus">CGSHiGG_07430</name>
</gene>
<protein>
    <recommendedName>
        <fullName evidence="1">Small ribosomal subunit protein uS17</fullName>
    </recommendedName>
    <alternativeName>
        <fullName evidence="2">30S ribosomal protein S17</fullName>
    </alternativeName>
</protein>
<name>RS17_HAEIG</name>
<accession>A5UHT9</accession>
<evidence type="ECO:0000255" key="1">
    <source>
        <dbReference type="HAMAP-Rule" id="MF_01345"/>
    </source>
</evidence>
<evidence type="ECO:0000305" key="2"/>
<keyword id="KW-0687">Ribonucleoprotein</keyword>
<keyword id="KW-0689">Ribosomal protein</keyword>
<keyword id="KW-0694">RNA-binding</keyword>
<keyword id="KW-0699">rRNA-binding</keyword>
<comment type="function">
    <text evidence="1">One of the primary rRNA binding proteins, it binds specifically to the 5'-end of 16S ribosomal RNA.</text>
</comment>
<comment type="subunit">
    <text evidence="1">Part of the 30S ribosomal subunit.</text>
</comment>
<comment type="similarity">
    <text evidence="1">Belongs to the universal ribosomal protein uS17 family.</text>
</comment>
<proteinExistence type="inferred from homology"/>